<protein>
    <recommendedName>
        <fullName>Protein KleE</fullName>
    </recommendedName>
    <alternativeName>
        <fullName>KcrB3 protein</fullName>
    </alternativeName>
</protein>
<organism>
    <name type="scientific">Escherichia coli</name>
    <dbReference type="NCBI Taxonomy" id="562"/>
    <lineage>
        <taxon>Bacteria</taxon>
        <taxon>Pseudomonadati</taxon>
        <taxon>Pseudomonadota</taxon>
        <taxon>Gammaproteobacteria</taxon>
        <taxon>Enterobacterales</taxon>
        <taxon>Enterobacteriaceae</taxon>
        <taxon>Escherichia</taxon>
    </lineage>
</organism>
<proteinExistence type="predicted"/>
<accession>Q52280</accession>
<comment type="subcellular location">
    <subcellularLocation>
        <location evidence="3">Cell membrane</location>
        <topology evidence="3">Multi-pass membrane protein</topology>
    </subcellularLocation>
</comment>
<dbReference type="EMBL" id="U67194">
    <property type="protein sequence ID" value="AAC64425.2"/>
    <property type="molecule type" value="Genomic_DNA"/>
</dbReference>
<dbReference type="RefSeq" id="WP_010890113.1">
    <property type="nucleotide sequence ID" value="NZ_JBEEEK010000035.1"/>
</dbReference>
<dbReference type="SMR" id="Q52280"/>
<dbReference type="GeneID" id="93083062"/>
<dbReference type="GO" id="GO:0005886">
    <property type="term" value="C:plasma membrane"/>
    <property type="evidence" value="ECO:0007669"/>
    <property type="project" value="UniProtKB-SubCell"/>
</dbReference>
<dbReference type="InterPro" id="IPR035362">
    <property type="entry name" value="KleE"/>
</dbReference>
<dbReference type="Pfam" id="PF17394">
    <property type="entry name" value="KleE"/>
    <property type="match status" value="1"/>
</dbReference>
<reference key="1">
    <citation type="journal article" date="1995" name="Microbiology">
        <title>Evolution of the korA-oriV segment of promiscuous IncP plasmids.</title>
        <authorList>
            <person name="Thomas C.M."/>
            <person name="Smith C.A."/>
            <person name="Ibbotson J.P."/>
            <person name="Johnston L."/>
            <person name="Wang N."/>
        </authorList>
    </citation>
    <scope>NUCLEOTIDE SEQUENCE [GENOMIC DNA]</scope>
</reference>
<reference key="2">
    <citation type="submission" date="2001-07" db="EMBL/GenBank/DDBJ databases">
        <authorList>
            <person name="Haines A.S."/>
            <person name="Thomas C.M."/>
        </authorList>
    </citation>
    <scope>SEQUENCE REVISION TO 21-36; 91; 97 AND 102</scope>
</reference>
<keyword id="KW-1003">Cell membrane</keyword>
<keyword id="KW-0472">Membrane</keyword>
<keyword id="KW-0614">Plasmid</keyword>
<keyword id="KW-0812">Transmembrane</keyword>
<keyword id="KW-1133">Transmembrane helix</keyword>
<sequence length="109" mass="11964">MSNIVKFPRASKPPAPEPVQPAAPAAAPAAPKAEGRGLVAGLVKFVWVATVLVWPVLKWVLAIITFFQFVRMLYHWNTPGVYAGWSFLAYFAALTAITYFVSIYKPKGL</sequence>
<gene>
    <name type="primary">kleE</name>
    <name type="synonym">kcrB3</name>
</gene>
<geneLocation type="plasmid">
    <name>IncP-beta R751</name>
</geneLocation>
<name>KLEE1_ECOLX</name>
<feature type="chain" id="PRO_0000068371" description="Protein KleE">
    <location>
        <begin position="1"/>
        <end position="109"/>
    </location>
</feature>
<feature type="transmembrane region" description="Helical" evidence="1">
    <location>
        <begin position="47"/>
        <end position="67"/>
    </location>
</feature>
<feature type="transmembrane region" description="Helical" evidence="1">
    <location>
        <begin position="81"/>
        <end position="101"/>
    </location>
</feature>
<feature type="region of interest" description="Disordered" evidence="2">
    <location>
        <begin position="1"/>
        <end position="27"/>
    </location>
</feature>
<feature type="compositionally biased region" description="Pro residues" evidence="2">
    <location>
        <begin position="11"/>
        <end position="21"/>
    </location>
</feature>
<evidence type="ECO:0000255" key="1"/>
<evidence type="ECO:0000256" key="2">
    <source>
        <dbReference type="SAM" id="MobiDB-lite"/>
    </source>
</evidence>
<evidence type="ECO:0000305" key="3"/>